<proteinExistence type="inferred from homology"/>
<sequence length="164" mass="18937">MSDKIGLFTGSFDPMTKGHVDLIERASRLFDKLYVGIFYNREKSGFFTIEARERIVKEALQHLRNVEVITSQNELAVTVARRLGTQAFVRGLRNSQDLDYEANMNFFNQELAGEMETIFLLSKPVYQHISSSRIRELIAFQQDIAAYVPQSVIKELERINDEKN</sequence>
<organism>
    <name type="scientific">Streptococcus sanguinis (strain SK36)</name>
    <dbReference type="NCBI Taxonomy" id="388919"/>
    <lineage>
        <taxon>Bacteria</taxon>
        <taxon>Bacillati</taxon>
        <taxon>Bacillota</taxon>
        <taxon>Bacilli</taxon>
        <taxon>Lactobacillales</taxon>
        <taxon>Streptococcaceae</taxon>
        <taxon>Streptococcus</taxon>
    </lineage>
</organism>
<gene>
    <name evidence="1" type="primary">coaD</name>
    <name type="ordered locus">SSA_0625</name>
</gene>
<comment type="function">
    <text evidence="1">Reversibly transfers an adenylyl group from ATP to 4'-phosphopantetheine, yielding dephospho-CoA (dPCoA) and pyrophosphate.</text>
</comment>
<comment type="catalytic activity">
    <reaction evidence="1">
        <text>(R)-4'-phosphopantetheine + ATP + H(+) = 3'-dephospho-CoA + diphosphate</text>
        <dbReference type="Rhea" id="RHEA:19801"/>
        <dbReference type="ChEBI" id="CHEBI:15378"/>
        <dbReference type="ChEBI" id="CHEBI:30616"/>
        <dbReference type="ChEBI" id="CHEBI:33019"/>
        <dbReference type="ChEBI" id="CHEBI:57328"/>
        <dbReference type="ChEBI" id="CHEBI:61723"/>
        <dbReference type="EC" id="2.7.7.3"/>
    </reaction>
</comment>
<comment type="cofactor">
    <cofactor evidence="1">
        <name>Mg(2+)</name>
        <dbReference type="ChEBI" id="CHEBI:18420"/>
    </cofactor>
</comment>
<comment type="pathway">
    <text evidence="1">Cofactor biosynthesis; coenzyme A biosynthesis; CoA from (R)-pantothenate: step 4/5.</text>
</comment>
<comment type="subunit">
    <text evidence="1">Homohexamer.</text>
</comment>
<comment type="subcellular location">
    <subcellularLocation>
        <location evidence="1">Cytoplasm</location>
    </subcellularLocation>
</comment>
<comment type="similarity">
    <text evidence="1">Belongs to the bacterial CoaD family.</text>
</comment>
<feature type="chain" id="PRO_1000011258" description="Phosphopantetheine adenylyltransferase">
    <location>
        <begin position="1"/>
        <end position="164"/>
    </location>
</feature>
<feature type="binding site" evidence="1">
    <location>
        <begin position="11"/>
        <end position="12"/>
    </location>
    <ligand>
        <name>ATP</name>
        <dbReference type="ChEBI" id="CHEBI:30616"/>
    </ligand>
</feature>
<feature type="binding site" evidence="1">
    <location>
        <position position="11"/>
    </location>
    <ligand>
        <name>substrate</name>
    </ligand>
</feature>
<feature type="binding site" evidence="1">
    <location>
        <position position="19"/>
    </location>
    <ligand>
        <name>ATP</name>
        <dbReference type="ChEBI" id="CHEBI:30616"/>
    </ligand>
</feature>
<feature type="binding site" evidence="1">
    <location>
        <position position="43"/>
    </location>
    <ligand>
        <name>substrate</name>
    </ligand>
</feature>
<feature type="binding site" evidence="1">
    <location>
        <position position="76"/>
    </location>
    <ligand>
        <name>substrate</name>
    </ligand>
</feature>
<feature type="binding site" evidence="1">
    <location>
        <position position="90"/>
    </location>
    <ligand>
        <name>substrate</name>
    </ligand>
</feature>
<feature type="binding site" evidence="1">
    <location>
        <begin position="91"/>
        <end position="93"/>
    </location>
    <ligand>
        <name>ATP</name>
        <dbReference type="ChEBI" id="CHEBI:30616"/>
    </ligand>
</feature>
<feature type="binding site" evidence="1">
    <location>
        <position position="101"/>
    </location>
    <ligand>
        <name>ATP</name>
        <dbReference type="ChEBI" id="CHEBI:30616"/>
    </ligand>
</feature>
<feature type="binding site" evidence="1">
    <location>
        <begin position="126"/>
        <end position="132"/>
    </location>
    <ligand>
        <name>ATP</name>
        <dbReference type="ChEBI" id="CHEBI:30616"/>
    </ligand>
</feature>
<feature type="site" description="Transition state stabilizer" evidence="1">
    <location>
        <position position="19"/>
    </location>
</feature>
<protein>
    <recommendedName>
        <fullName evidence="1">Phosphopantetheine adenylyltransferase</fullName>
        <ecNumber evidence="1">2.7.7.3</ecNumber>
    </recommendedName>
    <alternativeName>
        <fullName evidence="1">Dephospho-CoA pyrophosphorylase</fullName>
    </alternativeName>
    <alternativeName>
        <fullName evidence="1">Pantetheine-phosphate adenylyltransferase</fullName>
        <shortName evidence="1">PPAT</shortName>
    </alternativeName>
</protein>
<reference key="1">
    <citation type="journal article" date="2007" name="J. Bacteriol.">
        <title>Genome of the opportunistic pathogen Streptococcus sanguinis.</title>
        <authorList>
            <person name="Xu P."/>
            <person name="Alves J.M."/>
            <person name="Kitten T."/>
            <person name="Brown A."/>
            <person name="Chen Z."/>
            <person name="Ozaki L.S."/>
            <person name="Manque P."/>
            <person name="Ge X."/>
            <person name="Serrano M.G."/>
            <person name="Puiu D."/>
            <person name="Hendricks S."/>
            <person name="Wang Y."/>
            <person name="Chaplin M.D."/>
            <person name="Akan D."/>
            <person name="Paik S."/>
            <person name="Peterson D.L."/>
            <person name="Macrina F.L."/>
            <person name="Buck G.A."/>
        </authorList>
    </citation>
    <scope>NUCLEOTIDE SEQUENCE [LARGE SCALE GENOMIC DNA]</scope>
    <source>
        <strain>SK36</strain>
    </source>
</reference>
<dbReference type="EC" id="2.7.7.3" evidence="1"/>
<dbReference type="EMBL" id="CP000387">
    <property type="protein sequence ID" value="ABN44065.1"/>
    <property type="molecule type" value="Genomic_DNA"/>
</dbReference>
<dbReference type="RefSeq" id="WP_002921993.1">
    <property type="nucleotide sequence ID" value="NC_009009.1"/>
</dbReference>
<dbReference type="RefSeq" id="YP_001034615.1">
    <property type="nucleotide sequence ID" value="NC_009009.1"/>
</dbReference>
<dbReference type="SMR" id="A3CLL0"/>
<dbReference type="STRING" id="388919.SSA_0625"/>
<dbReference type="KEGG" id="ssa:SSA_0625"/>
<dbReference type="PATRIC" id="fig|388919.9.peg.602"/>
<dbReference type="eggNOG" id="COG0669">
    <property type="taxonomic scope" value="Bacteria"/>
</dbReference>
<dbReference type="HOGENOM" id="CLU_100149_0_1_9"/>
<dbReference type="OrthoDB" id="9806661at2"/>
<dbReference type="UniPathway" id="UPA00241">
    <property type="reaction ID" value="UER00355"/>
</dbReference>
<dbReference type="Proteomes" id="UP000002148">
    <property type="component" value="Chromosome"/>
</dbReference>
<dbReference type="GO" id="GO:0005737">
    <property type="term" value="C:cytoplasm"/>
    <property type="evidence" value="ECO:0007669"/>
    <property type="project" value="UniProtKB-SubCell"/>
</dbReference>
<dbReference type="GO" id="GO:0005524">
    <property type="term" value="F:ATP binding"/>
    <property type="evidence" value="ECO:0007669"/>
    <property type="project" value="UniProtKB-KW"/>
</dbReference>
<dbReference type="GO" id="GO:0004595">
    <property type="term" value="F:pantetheine-phosphate adenylyltransferase activity"/>
    <property type="evidence" value="ECO:0007669"/>
    <property type="project" value="UniProtKB-UniRule"/>
</dbReference>
<dbReference type="GO" id="GO:0015937">
    <property type="term" value="P:coenzyme A biosynthetic process"/>
    <property type="evidence" value="ECO:0007669"/>
    <property type="project" value="UniProtKB-UniRule"/>
</dbReference>
<dbReference type="CDD" id="cd02163">
    <property type="entry name" value="PPAT"/>
    <property type="match status" value="1"/>
</dbReference>
<dbReference type="Gene3D" id="3.40.50.620">
    <property type="entry name" value="HUPs"/>
    <property type="match status" value="1"/>
</dbReference>
<dbReference type="HAMAP" id="MF_00151">
    <property type="entry name" value="PPAT_bact"/>
    <property type="match status" value="1"/>
</dbReference>
<dbReference type="InterPro" id="IPR004821">
    <property type="entry name" value="Cyt_trans-like"/>
</dbReference>
<dbReference type="InterPro" id="IPR001980">
    <property type="entry name" value="PPAT"/>
</dbReference>
<dbReference type="InterPro" id="IPR014729">
    <property type="entry name" value="Rossmann-like_a/b/a_fold"/>
</dbReference>
<dbReference type="NCBIfam" id="TIGR01510">
    <property type="entry name" value="coaD_prev_kdtB"/>
    <property type="match status" value="1"/>
</dbReference>
<dbReference type="NCBIfam" id="TIGR00125">
    <property type="entry name" value="cyt_tran_rel"/>
    <property type="match status" value="1"/>
</dbReference>
<dbReference type="PANTHER" id="PTHR21342">
    <property type="entry name" value="PHOSPHOPANTETHEINE ADENYLYLTRANSFERASE"/>
    <property type="match status" value="1"/>
</dbReference>
<dbReference type="PANTHER" id="PTHR21342:SF1">
    <property type="entry name" value="PHOSPHOPANTETHEINE ADENYLYLTRANSFERASE"/>
    <property type="match status" value="1"/>
</dbReference>
<dbReference type="Pfam" id="PF01467">
    <property type="entry name" value="CTP_transf_like"/>
    <property type="match status" value="1"/>
</dbReference>
<dbReference type="PRINTS" id="PR01020">
    <property type="entry name" value="LPSBIOSNTHSS"/>
</dbReference>
<dbReference type="SUPFAM" id="SSF52374">
    <property type="entry name" value="Nucleotidylyl transferase"/>
    <property type="match status" value="1"/>
</dbReference>
<evidence type="ECO:0000255" key="1">
    <source>
        <dbReference type="HAMAP-Rule" id="MF_00151"/>
    </source>
</evidence>
<keyword id="KW-0067">ATP-binding</keyword>
<keyword id="KW-0173">Coenzyme A biosynthesis</keyword>
<keyword id="KW-0963">Cytoplasm</keyword>
<keyword id="KW-0460">Magnesium</keyword>
<keyword id="KW-0547">Nucleotide-binding</keyword>
<keyword id="KW-0548">Nucleotidyltransferase</keyword>
<keyword id="KW-1185">Reference proteome</keyword>
<keyword id="KW-0808">Transferase</keyword>
<name>COAD_STRSV</name>
<accession>A3CLL0</accession>